<organism>
    <name type="scientific">Acidothermus cellulolyticus (strain ATCC 43068 / DSM 8971 / 11B)</name>
    <dbReference type="NCBI Taxonomy" id="351607"/>
    <lineage>
        <taxon>Bacteria</taxon>
        <taxon>Bacillati</taxon>
        <taxon>Actinomycetota</taxon>
        <taxon>Actinomycetes</taxon>
        <taxon>Acidothermales</taxon>
        <taxon>Acidothermaceae</taxon>
        <taxon>Acidothermus</taxon>
    </lineage>
</organism>
<gene>
    <name evidence="1" type="primary">coaD</name>
    <name type="ordered locus">Acel_1578</name>
</gene>
<accession>A0LV90</accession>
<proteinExistence type="inferred from homology"/>
<keyword id="KW-0067">ATP-binding</keyword>
<keyword id="KW-0173">Coenzyme A biosynthesis</keyword>
<keyword id="KW-0963">Cytoplasm</keyword>
<keyword id="KW-0460">Magnesium</keyword>
<keyword id="KW-0547">Nucleotide-binding</keyword>
<keyword id="KW-0548">Nucleotidyltransferase</keyword>
<keyword id="KW-1185">Reference proteome</keyword>
<keyword id="KW-0808">Transferase</keyword>
<protein>
    <recommendedName>
        <fullName evidence="1">Phosphopantetheine adenylyltransferase</fullName>
        <ecNumber evidence="1">2.7.7.3</ecNumber>
    </recommendedName>
    <alternativeName>
        <fullName evidence="1">Dephospho-CoA pyrophosphorylase</fullName>
    </alternativeName>
    <alternativeName>
        <fullName evidence="1">Pantetheine-phosphate adenylyltransferase</fullName>
        <shortName evidence="1">PPAT</shortName>
    </alternativeName>
</protein>
<dbReference type="EC" id="2.7.7.3" evidence="1"/>
<dbReference type="EMBL" id="CP000481">
    <property type="protein sequence ID" value="ABK53350.1"/>
    <property type="molecule type" value="Genomic_DNA"/>
</dbReference>
<dbReference type="RefSeq" id="WP_011720413.1">
    <property type="nucleotide sequence ID" value="NC_008578.1"/>
</dbReference>
<dbReference type="SMR" id="A0LV90"/>
<dbReference type="FunCoup" id="A0LV90">
    <property type="interactions" value="153"/>
</dbReference>
<dbReference type="STRING" id="351607.Acel_1578"/>
<dbReference type="KEGG" id="ace:Acel_1578"/>
<dbReference type="eggNOG" id="COG0669">
    <property type="taxonomic scope" value="Bacteria"/>
</dbReference>
<dbReference type="HOGENOM" id="CLU_100149_0_1_11"/>
<dbReference type="InParanoid" id="A0LV90"/>
<dbReference type="OrthoDB" id="9806661at2"/>
<dbReference type="UniPathway" id="UPA00241">
    <property type="reaction ID" value="UER00355"/>
</dbReference>
<dbReference type="Proteomes" id="UP000008221">
    <property type="component" value="Chromosome"/>
</dbReference>
<dbReference type="GO" id="GO:0005737">
    <property type="term" value="C:cytoplasm"/>
    <property type="evidence" value="ECO:0007669"/>
    <property type="project" value="UniProtKB-SubCell"/>
</dbReference>
<dbReference type="GO" id="GO:0005524">
    <property type="term" value="F:ATP binding"/>
    <property type="evidence" value="ECO:0007669"/>
    <property type="project" value="UniProtKB-KW"/>
</dbReference>
<dbReference type="GO" id="GO:0004595">
    <property type="term" value="F:pantetheine-phosphate adenylyltransferase activity"/>
    <property type="evidence" value="ECO:0007669"/>
    <property type="project" value="UniProtKB-UniRule"/>
</dbReference>
<dbReference type="GO" id="GO:0015937">
    <property type="term" value="P:coenzyme A biosynthetic process"/>
    <property type="evidence" value="ECO:0007669"/>
    <property type="project" value="UniProtKB-UniRule"/>
</dbReference>
<dbReference type="CDD" id="cd02163">
    <property type="entry name" value="PPAT"/>
    <property type="match status" value="1"/>
</dbReference>
<dbReference type="FunFam" id="3.40.50.620:FF:000012">
    <property type="entry name" value="Phosphopantetheine adenylyltransferase"/>
    <property type="match status" value="1"/>
</dbReference>
<dbReference type="Gene3D" id="3.40.50.620">
    <property type="entry name" value="HUPs"/>
    <property type="match status" value="1"/>
</dbReference>
<dbReference type="HAMAP" id="MF_00151">
    <property type="entry name" value="PPAT_bact"/>
    <property type="match status" value="1"/>
</dbReference>
<dbReference type="InterPro" id="IPR004821">
    <property type="entry name" value="Cyt_trans-like"/>
</dbReference>
<dbReference type="InterPro" id="IPR001980">
    <property type="entry name" value="PPAT"/>
</dbReference>
<dbReference type="InterPro" id="IPR014729">
    <property type="entry name" value="Rossmann-like_a/b/a_fold"/>
</dbReference>
<dbReference type="NCBIfam" id="TIGR01510">
    <property type="entry name" value="coaD_prev_kdtB"/>
    <property type="match status" value="1"/>
</dbReference>
<dbReference type="NCBIfam" id="TIGR00125">
    <property type="entry name" value="cyt_tran_rel"/>
    <property type="match status" value="1"/>
</dbReference>
<dbReference type="PANTHER" id="PTHR21342">
    <property type="entry name" value="PHOSPHOPANTETHEINE ADENYLYLTRANSFERASE"/>
    <property type="match status" value="1"/>
</dbReference>
<dbReference type="PANTHER" id="PTHR21342:SF1">
    <property type="entry name" value="PHOSPHOPANTETHEINE ADENYLYLTRANSFERASE"/>
    <property type="match status" value="1"/>
</dbReference>
<dbReference type="Pfam" id="PF01467">
    <property type="entry name" value="CTP_transf_like"/>
    <property type="match status" value="1"/>
</dbReference>
<dbReference type="PRINTS" id="PR01020">
    <property type="entry name" value="LPSBIOSNTHSS"/>
</dbReference>
<dbReference type="SUPFAM" id="SSF52374">
    <property type="entry name" value="Nucleotidylyl transferase"/>
    <property type="match status" value="1"/>
</dbReference>
<sequence length="165" mass="18210">MRKAVCPGSFDPVTNGHLDIISRAAALYDEVTVAVLVNKAKRALFSVEERMDMVREATAQYPNVVVESFSGLLVDFCRARGIPVIIKGLRAVSDFDYELQMAQMNHSLAGVETLFLSTNPLYSFLSSSLVKEVAAYGGDVSTLIPDSVARRLRTRLFDPSREPDH</sequence>
<name>COAD_ACIC1</name>
<evidence type="ECO:0000255" key="1">
    <source>
        <dbReference type="HAMAP-Rule" id="MF_00151"/>
    </source>
</evidence>
<comment type="function">
    <text evidence="1">Reversibly transfers an adenylyl group from ATP to 4'-phosphopantetheine, yielding dephospho-CoA (dPCoA) and pyrophosphate.</text>
</comment>
<comment type="catalytic activity">
    <reaction evidence="1">
        <text>(R)-4'-phosphopantetheine + ATP + H(+) = 3'-dephospho-CoA + diphosphate</text>
        <dbReference type="Rhea" id="RHEA:19801"/>
        <dbReference type="ChEBI" id="CHEBI:15378"/>
        <dbReference type="ChEBI" id="CHEBI:30616"/>
        <dbReference type="ChEBI" id="CHEBI:33019"/>
        <dbReference type="ChEBI" id="CHEBI:57328"/>
        <dbReference type="ChEBI" id="CHEBI:61723"/>
        <dbReference type="EC" id="2.7.7.3"/>
    </reaction>
</comment>
<comment type="cofactor">
    <cofactor evidence="1">
        <name>Mg(2+)</name>
        <dbReference type="ChEBI" id="CHEBI:18420"/>
    </cofactor>
</comment>
<comment type="pathway">
    <text evidence="1">Cofactor biosynthesis; coenzyme A biosynthesis; CoA from (R)-pantothenate: step 4/5.</text>
</comment>
<comment type="subunit">
    <text evidence="1">Homohexamer.</text>
</comment>
<comment type="subcellular location">
    <subcellularLocation>
        <location evidence="1">Cytoplasm</location>
    </subcellularLocation>
</comment>
<comment type="similarity">
    <text evidence="1">Belongs to the bacterial CoaD family.</text>
</comment>
<feature type="chain" id="PRO_1000011083" description="Phosphopantetheine adenylyltransferase">
    <location>
        <begin position="1"/>
        <end position="165"/>
    </location>
</feature>
<feature type="binding site" evidence="1">
    <location>
        <begin position="9"/>
        <end position="10"/>
    </location>
    <ligand>
        <name>ATP</name>
        <dbReference type="ChEBI" id="CHEBI:30616"/>
    </ligand>
</feature>
<feature type="binding site" evidence="1">
    <location>
        <position position="9"/>
    </location>
    <ligand>
        <name>substrate</name>
    </ligand>
</feature>
<feature type="binding site" evidence="1">
    <location>
        <position position="17"/>
    </location>
    <ligand>
        <name>ATP</name>
        <dbReference type="ChEBI" id="CHEBI:30616"/>
    </ligand>
</feature>
<feature type="binding site" evidence="1">
    <location>
        <position position="41"/>
    </location>
    <ligand>
        <name>substrate</name>
    </ligand>
</feature>
<feature type="binding site" evidence="1">
    <location>
        <position position="73"/>
    </location>
    <ligand>
        <name>substrate</name>
    </ligand>
</feature>
<feature type="binding site" evidence="1">
    <location>
        <position position="87"/>
    </location>
    <ligand>
        <name>substrate</name>
    </ligand>
</feature>
<feature type="binding site" evidence="1">
    <location>
        <begin position="88"/>
        <end position="90"/>
    </location>
    <ligand>
        <name>ATP</name>
        <dbReference type="ChEBI" id="CHEBI:30616"/>
    </ligand>
</feature>
<feature type="binding site" evidence="1">
    <location>
        <position position="98"/>
    </location>
    <ligand>
        <name>ATP</name>
        <dbReference type="ChEBI" id="CHEBI:30616"/>
    </ligand>
</feature>
<feature type="binding site" evidence="1">
    <location>
        <begin position="122"/>
        <end position="128"/>
    </location>
    <ligand>
        <name>ATP</name>
        <dbReference type="ChEBI" id="CHEBI:30616"/>
    </ligand>
</feature>
<feature type="site" description="Transition state stabilizer" evidence="1">
    <location>
        <position position="17"/>
    </location>
</feature>
<reference key="1">
    <citation type="journal article" date="2009" name="Genome Res.">
        <title>Complete genome of the cellulolytic thermophile Acidothermus cellulolyticus 11B provides insights into its ecophysiological and evolutionary adaptations.</title>
        <authorList>
            <person name="Barabote R.D."/>
            <person name="Xie G."/>
            <person name="Leu D.H."/>
            <person name="Normand P."/>
            <person name="Necsulea A."/>
            <person name="Daubin V."/>
            <person name="Medigue C."/>
            <person name="Adney W.S."/>
            <person name="Xu X.C."/>
            <person name="Lapidus A."/>
            <person name="Parales R.E."/>
            <person name="Detter C."/>
            <person name="Pujic P."/>
            <person name="Bruce D."/>
            <person name="Lavire C."/>
            <person name="Challacombe J.F."/>
            <person name="Brettin T.S."/>
            <person name="Berry A.M."/>
        </authorList>
    </citation>
    <scope>NUCLEOTIDE SEQUENCE [LARGE SCALE GENOMIC DNA]</scope>
    <source>
        <strain>ATCC 43068 / DSM 8971 / 11B</strain>
    </source>
</reference>